<keyword id="KW-0010">Activator</keyword>
<keyword id="KW-0238">DNA-binding</keyword>
<keyword id="KW-0539">Nucleus</keyword>
<keyword id="KW-0804">Transcription</keyword>
<keyword id="KW-0805">Transcription regulation</keyword>
<sequence>MSFYDDQSGNLSPQRKLGRGKIEIKRIENTTNRQVTFCKRRNGLLKKAYELSVLCDAEVALIVFSTRGRLYEYANNSVKGTIERYKKACTDSPNTSSVSEANAQFYQQEASKLRQEISSIQKNNRNMMGESLGSLTVRDLKGLETKLEKGISRIRSKKNELLFAEIEYMQKKEIDLHNNNQYLRAKIAENERAQQHMNLMPGSSDYELAPPQSFDGRNYIQLNGLQPNNHYSRQDQTALQLV</sequence>
<proteinExistence type="evidence at transcript level"/>
<feature type="chain" id="PRO_0000199448" description="Floral homeotic protein AGAMOUS">
    <location>
        <begin position="1"/>
        <end position="242"/>
    </location>
</feature>
<feature type="domain" description="MADS-box" evidence="2">
    <location>
        <begin position="19"/>
        <end position="73"/>
    </location>
</feature>
<feature type="domain" description="K-box" evidence="3">
    <location>
        <begin position="103"/>
        <end position="193"/>
    </location>
</feature>
<comment type="function">
    <text evidence="1">Probable transcription factor involved in regulating genes that determines stamen and carpel development in wild-type flowers.</text>
</comment>
<comment type="subcellular location">
    <subcellularLocation>
        <location evidence="2">Nucleus</location>
    </subcellularLocation>
</comment>
<comment type="tissue specificity">
    <text>Flower. Preferentially expressed in stamen and carpel and weakly in petal. Undetected in leaves and roots.</text>
</comment>
<protein>
    <recommendedName>
        <fullName>Floral homeotic protein AGAMOUS</fullName>
    </recommendedName>
    <alternativeName>
        <fullName>GAG2</fullName>
    </alternativeName>
</protein>
<dbReference type="EMBL" id="Z46612">
    <property type="protein sequence ID" value="CAA86585.1"/>
    <property type="molecule type" value="mRNA"/>
</dbReference>
<dbReference type="SMR" id="Q40872"/>
<dbReference type="GO" id="GO:0005634">
    <property type="term" value="C:nucleus"/>
    <property type="evidence" value="ECO:0007669"/>
    <property type="project" value="UniProtKB-SubCell"/>
</dbReference>
<dbReference type="GO" id="GO:0003700">
    <property type="term" value="F:DNA-binding transcription factor activity"/>
    <property type="evidence" value="ECO:0007669"/>
    <property type="project" value="InterPro"/>
</dbReference>
<dbReference type="GO" id="GO:0046983">
    <property type="term" value="F:protein dimerization activity"/>
    <property type="evidence" value="ECO:0007669"/>
    <property type="project" value="InterPro"/>
</dbReference>
<dbReference type="GO" id="GO:0000977">
    <property type="term" value="F:RNA polymerase II transcription regulatory region sequence-specific DNA binding"/>
    <property type="evidence" value="ECO:0007669"/>
    <property type="project" value="InterPro"/>
</dbReference>
<dbReference type="GO" id="GO:0045944">
    <property type="term" value="P:positive regulation of transcription by RNA polymerase II"/>
    <property type="evidence" value="ECO:0007669"/>
    <property type="project" value="InterPro"/>
</dbReference>
<dbReference type="CDD" id="cd00265">
    <property type="entry name" value="MADS_MEF2_like"/>
    <property type="match status" value="1"/>
</dbReference>
<dbReference type="FunFam" id="3.40.1810.10:FF:000009">
    <property type="entry name" value="agamous-like MADS-box protein AGL11"/>
    <property type="match status" value="1"/>
</dbReference>
<dbReference type="Gene3D" id="3.40.1810.10">
    <property type="entry name" value="Transcription factor, MADS-box"/>
    <property type="match status" value="1"/>
</dbReference>
<dbReference type="InterPro" id="IPR050142">
    <property type="entry name" value="MADS-box/MEF2_TF"/>
</dbReference>
<dbReference type="InterPro" id="IPR033896">
    <property type="entry name" value="MEF2-like_N"/>
</dbReference>
<dbReference type="InterPro" id="IPR002487">
    <property type="entry name" value="TF_Kbox"/>
</dbReference>
<dbReference type="InterPro" id="IPR002100">
    <property type="entry name" value="TF_MADSbox"/>
</dbReference>
<dbReference type="InterPro" id="IPR036879">
    <property type="entry name" value="TF_MADSbox_sf"/>
</dbReference>
<dbReference type="PANTHER" id="PTHR48019">
    <property type="entry name" value="SERUM RESPONSE FACTOR HOMOLOG"/>
    <property type="match status" value="1"/>
</dbReference>
<dbReference type="Pfam" id="PF01486">
    <property type="entry name" value="K-box"/>
    <property type="match status" value="1"/>
</dbReference>
<dbReference type="Pfam" id="PF00319">
    <property type="entry name" value="SRF-TF"/>
    <property type="match status" value="1"/>
</dbReference>
<dbReference type="PRINTS" id="PR00404">
    <property type="entry name" value="MADSDOMAIN"/>
</dbReference>
<dbReference type="SMART" id="SM00432">
    <property type="entry name" value="MADS"/>
    <property type="match status" value="1"/>
</dbReference>
<dbReference type="SUPFAM" id="SSF55455">
    <property type="entry name" value="SRF-like"/>
    <property type="match status" value="1"/>
</dbReference>
<dbReference type="PROSITE" id="PS51297">
    <property type="entry name" value="K_BOX"/>
    <property type="match status" value="1"/>
</dbReference>
<dbReference type="PROSITE" id="PS00350">
    <property type="entry name" value="MADS_BOX_1"/>
    <property type="match status" value="1"/>
</dbReference>
<dbReference type="PROSITE" id="PS50066">
    <property type="entry name" value="MADS_BOX_2"/>
    <property type="match status" value="1"/>
</dbReference>
<evidence type="ECO:0000250" key="1"/>
<evidence type="ECO:0000255" key="2">
    <source>
        <dbReference type="PROSITE-ProRule" id="PRU00251"/>
    </source>
</evidence>
<evidence type="ECO:0000255" key="3">
    <source>
        <dbReference type="PROSITE-ProRule" id="PRU00629"/>
    </source>
</evidence>
<organism>
    <name type="scientific">Panax ginseng</name>
    <name type="common">Korean ginseng</name>
    <dbReference type="NCBI Taxonomy" id="4054"/>
    <lineage>
        <taxon>Eukaryota</taxon>
        <taxon>Viridiplantae</taxon>
        <taxon>Streptophyta</taxon>
        <taxon>Embryophyta</taxon>
        <taxon>Tracheophyta</taxon>
        <taxon>Spermatophyta</taxon>
        <taxon>Magnoliopsida</taxon>
        <taxon>eudicotyledons</taxon>
        <taxon>Gunneridae</taxon>
        <taxon>Pentapetalae</taxon>
        <taxon>asterids</taxon>
        <taxon>campanulids</taxon>
        <taxon>Apiales</taxon>
        <taxon>Araliaceae</taxon>
        <taxon>Panax</taxon>
    </lineage>
</organism>
<accession>Q40872</accession>
<reference key="1">
    <citation type="online journal article" date="1995" name="Plant Gene Register">
        <title>The cDNA sequence of two MADS box genes in Panax ginseng (GAG2, GAG1).</title>
        <authorList>
            <person name="Kim Y.S."/>
            <person name="Lee H.S."/>
            <person name="Hoon L.S."/>
            <person name="Yoo O.J."/>
            <person name="Chung W.I."/>
            <person name="Liu J.R."/>
        </authorList>
        <locator>PGR95-060</locator>
    </citation>
    <scope>NUCLEOTIDE SEQUENCE [MRNA]</scope>
    <source>
        <tissue>Flower</tissue>
    </source>
</reference>
<name>AG_PANGI</name>
<gene>
    <name type="primary">AG2</name>
</gene>